<proteinExistence type="inferred from homology"/>
<feature type="chain" id="PRO_0000140511" description="Delta-aminolevulinic acid dehydratase">
    <location>
        <begin position="1"/>
        <end position="324"/>
    </location>
</feature>
<feature type="active site" description="Schiff-base intermediate with substrate" evidence="1">
    <location>
        <position position="195"/>
    </location>
</feature>
<feature type="active site" description="Schiff-base intermediate with substrate" evidence="1">
    <location>
        <position position="248"/>
    </location>
</feature>
<feature type="binding site" evidence="1">
    <location>
        <position position="118"/>
    </location>
    <ligand>
        <name>Zn(2+)</name>
        <dbReference type="ChEBI" id="CHEBI:29105"/>
        <note>catalytic</note>
    </ligand>
</feature>
<feature type="binding site" evidence="1">
    <location>
        <position position="120"/>
    </location>
    <ligand>
        <name>Zn(2+)</name>
        <dbReference type="ChEBI" id="CHEBI:29105"/>
        <note>catalytic</note>
    </ligand>
</feature>
<feature type="binding site" evidence="1">
    <location>
        <position position="128"/>
    </location>
    <ligand>
        <name>Zn(2+)</name>
        <dbReference type="ChEBI" id="CHEBI:29105"/>
        <note>catalytic</note>
    </ligand>
</feature>
<feature type="binding site" evidence="1">
    <location>
        <position position="205"/>
    </location>
    <ligand>
        <name>5-aminolevulinate</name>
        <dbReference type="ChEBI" id="CHEBI:356416"/>
        <label>1</label>
    </ligand>
</feature>
<feature type="binding site" evidence="1">
    <location>
        <position position="217"/>
    </location>
    <ligand>
        <name>5-aminolevulinate</name>
        <dbReference type="ChEBI" id="CHEBI:356416"/>
        <label>1</label>
    </ligand>
</feature>
<feature type="binding site" evidence="1">
    <location>
        <position position="233"/>
    </location>
    <ligand>
        <name>Mg(2+)</name>
        <dbReference type="ChEBI" id="CHEBI:18420"/>
    </ligand>
</feature>
<feature type="binding site" evidence="1">
    <location>
        <position position="274"/>
    </location>
    <ligand>
        <name>5-aminolevulinate</name>
        <dbReference type="ChEBI" id="CHEBI:356416"/>
        <label>2</label>
    </ligand>
</feature>
<feature type="binding site" evidence="1">
    <location>
        <position position="313"/>
    </location>
    <ligand>
        <name>5-aminolevulinate</name>
        <dbReference type="ChEBI" id="CHEBI:356416"/>
        <label>2</label>
    </ligand>
</feature>
<gene>
    <name type="primary">hemB</name>
    <name type="ordered locus">SAV1668</name>
</gene>
<dbReference type="EC" id="4.2.1.24"/>
<dbReference type="EMBL" id="BA000017">
    <property type="protein sequence ID" value="BAB57830.1"/>
    <property type="molecule type" value="Genomic_DNA"/>
</dbReference>
<dbReference type="RefSeq" id="WP_000667126.1">
    <property type="nucleotide sequence ID" value="NC_002758.2"/>
</dbReference>
<dbReference type="SMR" id="P64333"/>
<dbReference type="KEGG" id="sav:SAV1668"/>
<dbReference type="HOGENOM" id="CLU_035731_0_0_9"/>
<dbReference type="PhylomeDB" id="P64333"/>
<dbReference type="UniPathway" id="UPA00251">
    <property type="reaction ID" value="UER00318"/>
</dbReference>
<dbReference type="Proteomes" id="UP000002481">
    <property type="component" value="Chromosome"/>
</dbReference>
<dbReference type="GO" id="GO:0005829">
    <property type="term" value="C:cytosol"/>
    <property type="evidence" value="ECO:0007669"/>
    <property type="project" value="TreeGrafter"/>
</dbReference>
<dbReference type="GO" id="GO:0004655">
    <property type="term" value="F:porphobilinogen synthase activity"/>
    <property type="evidence" value="ECO:0007669"/>
    <property type="project" value="UniProtKB-EC"/>
</dbReference>
<dbReference type="GO" id="GO:0008270">
    <property type="term" value="F:zinc ion binding"/>
    <property type="evidence" value="ECO:0007669"/>
    <property type="project" value="TreeGrafter"/>
</dbReference>
<dbReference type="GO" id="GO:0006782">
    <property type="term" value="P:protoporphyrinogen IX biosynthetic process"/>
    <property type="evidence" value="ECO:0007669"/>
    <property type="project" value="UniProtKB-UniPathway"/>
</dbReference>
<dbReference type="CDD" id="cd00384">
    <property type="entry name" value="ALAD_PBGS"/>
    <property type="match status" value="1"/>
</dbReference>
<dbReference type="FunFam" id="3.20.20.70:FF:000019">
    <property type="entry name" value="Delta-aminolevulinic acid dehydratase"/>
    <property type="match status" value="1"/>
</dbReference>
<dbReference type="Gene3D" id="3.20.20.70">
    <property type="entry name" value="Aldolase class I"/>
    <property type="match status" value="1"/>
</dbReference>
<dbReference type="InterPro" id="IPR001731">
    <property type="entry name" value="ALAD"/>
</dbReference>
<dbReference type="InterPro" id="IPR030656">
    <property type="entry name" value="ALAD_AS"/>
</dbReference>
<dbReference type="InterPro" id="IPR013785">
    <property type="entry name" value="Aldolase_TIM"/>
</dbReference>
<dbReference type="NCBIfam" id="NF006762">
    <property type="entry name" value="PRK09283.1"/>
    <property type="match status" value="1"/>
</dbReference>
<dbReference type="PANTHER" id="PTHR11458">
    <property type="entry name" value="DELTA-AMINOLEVULINIC ACID DEHYDRATASE"/>
    <property type="match status" value="1"/>
</dbReference>
<dbReference type="PANTHER" id="PTHR11458:SF0">
    <property type="entry name" value="DELTA-AMINOLEVULINIC ACID DEHYDRATASE"/>
    <property type="match status" value="1"/>
</dbReference>
<dbReference type="Pfam" id="PF00490">
    <property type="entry name" value="ALAD"/>
    <property type="match status" value="1"/>
</dbReference>
<dbReference type="PIRSF" id="PIRSF001415">
    <property type="entry name" value="Porphbilin_synth"/>
    <property type="match status" value="1"/>
</dbReference>
<dbReference type="PRINTS" id="PR00144">
    <property type="entry name" value="DALDHYDRTASE"/>
</dbReference>
<dbReference type="SMART" id="SM01004">
    <property type="entry name" value="ALAD"/>
    <property type="match status" value="1"/>
</dbReference>
<dbReference type="SUPFAM" id="SSF51569">
    <property type="entry name" value="Aldolase"/>
    <property type="match status" value="1"/>
</dbReference>
<dbReference type="PROSITE" id="PS00169">
    <property type="entry name" value="D_ALA_DEHYDRATASE"/>
    <property type="match status" value="1"/>
</dbReference>
<reference key="1">
    <citation type="journal article" date="2001" name="Lancet">
        <title>Whole genome sequencing of meticillin-resistant Staphylococcus aureus.</title>
        <authorList>
            <person name="Kuroda M."/>
            <person name="Ohta T."/>
            <person name="Uchiyama I."/>
            <person name="Baba T."/>
            <person name="Yuzawa H."/>
            <person name="Kobayashi I."/>
            <person name="Cui L."/>
            <person name="Oguchi A."/>
            <person name="Aoki K."/>
            <person name="Nagai Y."/>
            <person name="Lian J.-Q."/>
            <person name="Ito T."/>
            <person name="Kanamori M."/>
            <person name="Matsumaru H."/>
            <person name="Maruyama A."/>
            <person name="Murakami H."/>
            <person name="Hosoyama A."/>
            <person name="Mizutani-Ui Y."/>
            <person name="Takahashi N.K."/>
            <person name="Sawano T."/>
            <person name="Inoue R."/>
            <person name="Kaito C."/>
            <person name="Sekimizu K."/>
            <person name="Hirakawa H."/>
            <person name="Kuhara S."/>
            <person name="Goto S."/>
            <person name="Yabuzaki J."/>
            <person name="Kanehisa M."/>
            <person name="Yamashita A."/>
            <person name="Oshima K."/>
            <person name="Furuya K."/>
            <person name="Yoshino C."/>
            <person name="Shiba T."/>
            <person name="Hattori M."/>
            <person name="Ogasawara N."/>
            <person name="Hayashi H."/>
            <person name="Hiramatsu K."/>
        </authorList>
    </citation>
    <scope>NUCLEOTIDE SEQUENCE [LARGE SCALE GENOMIC DNA]</scope>
    <source>
        <strain>Mu50 / ATCC 700699</strain>
    </source>
</reference>
<comment type="function">
    <text evidence="1">Catalyzes an early step in the biosynthesis of tetrapyrroles. Binds two molecules of 5-aminolevulinate per subunit, each at a distinct site, and catalyzes their condensation to form porphobilinogen (By similarity).</text>
</comment>
<comment type="catalytic activity">
    <reaction>
        <text>2 5-aminolevulinate = porphobilinogen + 2 H2O + H(+)</text>
        <dbReference type="Rhea" id="RHEA:24064"/>
        <dbReference type="ChEBI" id="CHEBI:15377"/>
        <dbReference type="ChEBI" id="CHEBI:15378"/>
        <dbReference type="ChEBI" id="CHEBI:58126"/>
        <dbReference type="ChEBI" id="CHEBI:356416"/>
        <dbReference type="EC" id="4.2.1.24"/>
    </reaction>
</comment>
<comment type="cofactor">
    <cofactor evidence="1">
        <name>Zn(2+)</name>
        <dbReference type="ChEBI" id="CHEBI:29105"/>
    </cofactor>
    <text evidence="1">Binds 1 zinc ion per monomer.</text>
</comment>
<comment type="pathway">
    <text>Porphyrin-containing compound metabolism; protoporphyrin-IX biosynthesis; coproporphyrinogen-III from 5-aminolevulinate: step 1/4.</text>
</comment>
<comment type="subunit">
    <text evidence="1">Homooctamer.</text>
</comment>
<comment type="similarity">
    <text evidence="2">Belongs to the ALAD family.</text>
</comment>
<organism>
    <name type="scientific">Staphylococcus aureus (strain Mu50 / ATCC 700699)</name>
    <dbReference type="NCBI Taxonomy" id="158878"/>
    <lineage>
        <taxon>Bacteria</taxon>
        <taxon>Bacillati</taxon>
        <taxon>Bacillota</taxon>
        <taxon>Bacilli</taxon>
        <taxon>Bacillales</taxon>
        <taxon>Staphylococcaceae</taxon>
        <taxon>Staphylococcus</taxon>
    </lineage>
</organism>
<sequence>MKFDRHRRLRSSATMRDMVRENHVRKEDLIYPIFVVEKDDVKKEIKSLPGVYQISLNLLESELKEAYDLGIRAIMFFGVPNSKDDIGTGAYIHDGVIQQATRIAKKMYDDLLIVADTCLCEYTDHGHCGVIDDHTHDVDNDKSLPLLVKTAISQVEAGADIIAPSNMMDGFVAEIRRGLDEAGYYNIPIMSYGVKYASSFFGPFRDAADSAPSFGDRKTYQMDPANRLEALRELESDLKEGCDMMIVKPALSYLDIVRDVKNHTNVPVVAYNVSGEYSMTKAAAQNGWIDEERVVMEQMVSMKRAGADMIITYFAKDICRYLDK</sequence>
<keyword id="KW-0350">Heme biosynthesis</keyword>
<keyword id="KW-0456">Lyase</keyword>
<keyword id="KW-0460">Magnesium</keyword>
<keyword id="KW-0479">Metal-binding</keyword>
<keyword id="KW-0627">Porphyrin biosynthesis</keyword>
<keyword id="KW-0862">Zinc</keyword>
<name>HEM2_STAAM</name>
<protein>
    <recommendedName>
        <fullName>Delta-aminolevulinic acid dehydratase</fullName>
        <shortName>ALAD</shortName>
        <shortName>ALADH</shortName>
        <ecNumber>4.2.1.24</ecNumber>
    </recommendedName>
    <alternativeName>
        <fullName>Porphobilinogen synthase</fullName>
    </alternativeName>
</protein>
<accession>P64333</accession>
<accession>Q99TJ3</accession>
<evidence type="ECO:0000250" key="1"/>
<evidence type="ECO:0000305" key="2"/>